<sequence>MGRAWKFGDDIDTDVIIQGKYLVINEPEELAKHVFENLRPEFAKEVKKGDFVVAGENFGCGSSREHAPLALKATGIEAVIAKSYARIFFRNAINIGLRVLECKETDKIEDGDELEVDYEKGVIYNKTKGEEYPINPLPDFLKEILEKGGLVEFAKSLRERA</sequence>
<gene>
    <name type="primary">leuD1</name>
    <name type="ordered locus">AF_0629</name>
</gene>
<organism>
    <name type="scientific">Archaeoglobus fulgidus (strain ATCC 49558 / DSM 4304 / JCM 9628 / NBRC 100126 / VC-16)</name>
    <dbReference type="NCBI Taxonomy" id="224325"/>
    <lineage>
        <taxon>Archaea</taxon>
        <taxon>Methanobacteriati</taxon>
        <taxon>Methanobacteriota</taxon>
        <taxon>Archaeoglobi</taxon>
        <taxon>Archaeoglobales</taxon>
        <taxon>Archaeoglobaceae</taxon>
        <taxon>Archaeoglobus</taxon>
    </lineage>
</organism>
<keyword id="KW-0028">Amino-acid biosynthesis</keyword>
<keyword id="KW-0100">Branched-chain amino acid biosynthesis</keyword>
<keyword id="KW-0432">Leucine biosynthesis</keyword>
<keyword id="KW-0456">Lyase</keyword>
<keyword id="KW-1185">Reference proteome</keyword>
<comment type="function">
    <text evidence="1">Catalyzes the isomerization between 2-isopropylmalate and 3-isopropylmalate, via the formation of 2-isopropylmaleate.</text>
</comment>
<comment type="catalytic activity">
    <reaction>
        <text>(2R,3S)-3-isopropylmalate = (2S)-2-isopropylmalate</text>
        <dbReference type="Rhea" id="RHEA:32287"/>
        <dbReference type="ChEBI" id="CHEBI:1178"/>
        <dbReference type="ChEBI" id="CHEBI:35121"/>
        <dbReference type="EC" id="4.2.1.33"/>
    </reaction>
</comment>
<comment type="pathway">
    <text>Amino-acid biosynthesis; L-leucine biosynthesis; L-leucine from 3-methyl-2-oxobutanoate: step 2/4.</text>
</comment>
<comment type="subunit">
    <text evidence="1">Heterodimer of LeuC and LeuD.</text>
</comment>
<comment type="similarity">
    <text evidence="2">Belongs to the LeuD family. LeuD type 2 subfamily.</text>
</comment>
<proteinExistence type="inferred from homology"/>
<evidence type="ECO:0000250" key="1"/>
<evidence type="ECO:0000305" key="2"/>
<feature type="chain" id="PRO_0000141931" description="3-isopropylmalate dehydratase small subunit 1">
    <location>
        <begin position="1"/>
        <end position="161"/>
    </location>
</feature>
<reference key="1">
    <citation type="journal article" date="1997" name="Nature">
        <title>The complete genome sequence of the hyperthermophilic, sulphate-reducing archaeon Archaeoglobus fulgidus.</title>
        <authorList>
            <person name="Klenk H.-P."/>
            <person name="Clayton R.A."/>
            <person name="Tomb J.-F."/>
            <person name="White O."/>
            <person name="Nelson K.E."/>
            <person name="Ketchum K.A."/>
            <person name="Dodson R.J."/>
            <person name="Gwinn M.L."/>
            <person name="Hickey E.K."/>
            <person name="Peterson J.D."/>
            <person name="Richardson D.L."/>
            <person name="Kerlavage A.R."/>
            <person name="Graham D.E."/>
            <person name="Kyrpides N.C."/>
            <person name="Fleischmann R.D."/>
            <person name="Quackenbush J."/>
            <person name="Lee N.H."/>
            <person name="Sutton G.G."/>
            <person name="Gill S.R."/>
            <person name="Kirkness E.F."/>
            <person name="Dougherty B.A."/>
            <person name="McKenney K."/>
            <person name="Adams M.D."/>
            <person name="Loftus B.J."/>
            <person name="Peterson S.N."/>
            <person name="Reich C.I."/>
            <person name="McNeil L.K."/>
            <person name="Badger J.H."/>
            <person name="Glodek A."/>
            <person name="Zhou L."/>
            <person name="Overbeek R."/>
            <person name="Gocayne J.D."/>
            <person name="Weidman J.F."/>
            <person name="McDonald L.A."/>
            <person name="Utterback T.R."/>
            <person name="Cotton M.D."/>
            <person name="Spriggs T."/>
            <person name="Artiach P."/>
            <person name="Kaine B.P."/>
            <person name="Sykes S.M."/>
            <person name="Sadow P.W."/>
            <person name="D'Andrea K.P."/>
            <person name="Bowman C."/>
            <person name="Fujii C."/>
            <person name="Garland S.A."/>
            <person name="Mason T.M."/>
            <person name="Olsen G.J."/>
            <person name="Fraser C.M."/>
            <person name="Smith H.O."/>
            <person name="Woese C.R."/>
            <person name="Venter J.C."/>
        </authorList>
    </citation>
    <scope>NUCLEOTIDE SEQUENCE [LARGE SCALE GENOMIC DNA]</scope>
    <source>
        <strain>ATCC 49558 / DSM 4304 / JCM 9628 / NBRC 100126 / VC-16</strain>
    </source>
</reference>
<protein>
    <recommendedName>
        <fullName>3-isopropylmalate dehydratase small subunit 1</fullName>
        <ecNumber>4.2.1.33</ecNumber>
    </recommendedName>
    <alternativeName>
        <fullName>Alpha-IPM isomerase 1</fullName>
        <shortName>IPMI 1</shortName>
    </alternativeName>
    <alternativeName>
        <fullName>Isopropylmalate isomerase 1</fullName>
    </alternativeName>
</protein>
<name>LEUD1_ARCFU</name>
<dbReference type="EC" id="4.2.1.33"/>
<dbReference type="EMBL" id="AE000782">
    <property type="protein sequence ID" value="AAB90610.1"/>
    <property type="molecule type" value="Genomic_DNA"/>
</dbReference>
<dbReference type="PIR" id="E69328">
    <property type="entry name" value="E69328"/>
</dbReference>
<dbReference type="RefSeq" id="WP_010878133.1">
    <property type="nucleotide sequence ID" value="NC_000917.1"/>
</dbReference>
<dbReference type="SMR" id="O29626"/>
<dbReference type="STRING" id="224325.AF_0629"/>
<dbReference type="PaxDb" id="224325-AF_0629"/>
<dbReference type="EnsemblBacteria" id="AAB90610">
    <property type="protein sequence ID" value="AAB90610"/>
    <property type="gene ID" value="AF_0629"/>
</dbReference>
<dbReference type="KEGG" id="afu:AF_0629"/>
<dbReference type="eggNOG" id="arCOG02230">
    <property type="taxonomic scope" value="Archaea"/>
</dbReference>
<dbReference type="HOGENOM" id="CLU_081378_1_1_2"/>
<dbReference type="OrthoDB" id="6505at2157"/>
<dbReference type="PhylomeDB" id="O29626"/>
<dbReference type="UniPathway" id="UPA00048">
    <property type="reaction ID" value="UER00071"/>
</dbReference>
<dbReference type="Proteomes" id="UP000002199">
    <property type="component" value="Chromosome"/>
</dbReference>
<dbReference type="GO" id="GO:0003861">
    <property type="term" value="F:3-isopropylmalate dehydratase activity"/>
    <property type="evidence" value="ECO:0007669"/>
    <property type="project" value="UniProtKB-UniRule"/>
</dbReference>
<dbReference type="GO" id="GO:0009098">
    <property type="term" value="P:L-leucine biosynthetic process"/>
    <property type="evidence" value="ECO:0007669"/>
    <property type="project" value="UniProtKB-UniRule"/>
</dbReference>
<dbReference type="CDD" id="cd01577">
    <property type="entry name" value="IPMI_Swivel"/>
    <property type="match status" value="1"/>
</dbReference>
<dbReference type="Gene3D" id="3.20.19.10">
    <property type="entry name" value="Aconitase, domain 4"/>
    <property type="match status" value="1"/>
</dbReference>
<dbReference type="HAMAP" id="MF_01032">
    <property type="entry name" value="LeuD_type2"/>
    <property type="match status" value="1"/>
</dbReference>
<dbReference type="InterPro" id="IPR015928">
    <property type="entry name" value="Aconitase/3IPM_dehydase_swvl"/>
</dbReference>
<dbReference type="InterPro" id="IPR000573">
    <property type="entry name" value="AconitaseA/IPMdHydase_ssu_swvl"/>
</dbReference>
<dbReference type="InterPro" id="IPR033940">
    <property type="entry name" value="IPMI_Swivel"/>
</dbReference>
<dbReference type="InterPro" id="IPR050075">
    <property type="entry name" value="LeuD"/>
</dbReference>
<dbReference type="InterPro" id="IPR011827">
    <property type="entry name" value="LeuD_type2/HacB/DmdB"/>
</dbReference>
<dbReference type="NCBIfam" id="TIGR02087">
    <property type="entry name" value="LEUD_arch"/>
    <property type="match status" value="1"/>
</dbReference>
<dbReference type="PANTHER" id="PTHR43345:SF2">
    <property type="entry name" value="3-ISOPROPYLMALATE DEHYDRATASE SMALL SUBUNIT 1"/>
    <property type="match status" value="1"/>
</dbReference>
<dbReference type="PANTHER" id="PTHR43345">
    <property type="entry name" value="3-ISOPROPYLMALATE DEHYDRATASE SMALL SUBUNIT 2-RELATED-RELATED"/>
    <property type="match status" value="1"/>
</dbReference>
<dbReference type="Pfam" id="PF00694">
    <property type="entry name" value="Aconitase_C"/>
    <property type="match status" value="1"/>
</dbReference>
<dbReference type="SUPFAM" id="SSF52016">
    <property type="entry name" value="LeuD/IlvD-like"/>
    <property type="match status" value="1"/>
</dbReference>
<accession>O29626</accession>